<name>Y1615_STAAT</name>
<organism>
    <name type="scientific">Staphylococcus aureus (strain USA300 / TCH1516)</name>
    <dbReference type="NCBI Taxonomy" id="451516"/>
    <lineage>
        <taxon>Bacteria</taxon>
        <taxon>Bacillati</taxon>
        <taxon>Bacillota</taxon>
        <taxon>Bacilli</taxon>
        <taxon>Bacillales</taxon>
        <taxon>Staphylococcaceae</taxon>
        <taxon>Staphylococcus</taxon>
    </lineage>
</organism>
<protein>
    <recommendedName>
        <fullName evidence="1">UPF0473 protein USA300HOU_1615</fullName>
    </recommendedName>
</protein>
<sequence>MTEHNHDSQLEINNEEELLTLFDEEGNEVLYRKVLEFYHPEFKKEYVILAEEGAQSDEDDMIELVPMINEPDESGDGGKLVPIETDEEWDMIEEVVNTEMEE</sequence>
<feature type="chain" id="PRO_1000087506" description="UPF0473 protein USA300HOU_1615">
    <location>
        <begin position="1"/>
        <end position="102"/>
    </location>
</feature>
<dbReference type="EMBL" id="CP000730">
    <property type="protein sequence ID" value="ABX29622.1"/>
    <property type="molecule type" value="Genomic_DNA"/>
</dbReference>
<dbReference type="RefSeq" id="WP_000134779.1">
    <property type="nucleotide sequence ID" value="NC_010079.1"/>
</dbReference>
<dbReference type="KEGG" id="sax:USA300HOU_1615"/>
<dbReference type="HOGENOM" id="CLU_146610_2_1_9"/>
<dbReference type="BioCyc" id="SAUR451516-HMP:GTV5-1634-MONOMER"/>
<dbReference type="HAMAP" id="MF_01448">
    <property type="entry name" value="UPF0473"/>
    <property type="match status" value="1"/>
</dbReference>
<dbReference type="InterPro" id="IPR009711">
    <property type="entry name" value="UPF0473"/>
</dbReference>
<dbReference type="NCBIfam" id="NF010214">
    <property type="entry name" value="PRK13678.1-1"/>
    <property type="match status" value="1"/>
</dbReference>
<dbReference type="PANTHER" id="PTHR40066">
    <property type="entry name" value="UPF0473 PROTEIN CBO2561/CLC_2432"/>
    <property type="match status" value="1"/>
</dbReference>
<dbReference type="PANTHER" id="PTHR40066:SF1">
    <property type="entry name" value="UPF0473 PROTEIN CBO2561_CLC_2432"/>
    <property type="match status" value="1"/>
</dbReference>
<dbReference type="Pfam" id="PF06949">
    <property type="entry name" value="DUF1292"/>
    <property type="match status" value="1"/>
</dbReference>
<evidence type="ECO:0000255" key="1">
    <source>
        <dbReference type="HAMAP-Rule" id="MF_01448"/>
    </source>
</evidence>
<accession>A8Z4F3</accession>
<proteinExistence type="inferred from homology"/>
<reference key="1">
    <citation type="journal article" date="2007" name="BMC Microbiol.">
        <title>Subtle genetic changes enhance virulence of methicillin resistant and sensitive Staphylococcus aureus.</title>
        <authorList>
            <person name="Highlander S.K."/>
            <person name="Hulten K.G."/>
            <person name="Qin X."/>
            <person name="Jiang H."/>
            <person name="Yerrapragada S."/>
            <person name="Mason E.O. Jr."/>
            <person name="Shang Y."/>
            <person name="Williams T.M."/>
            <person name="Fortunov R.M."/>
            <person name="Liu Y."/>
            <person name="Igboeli O."/>
            <person name="Petrosino J."/>
            <person name="Tirumalai M."/>
            <person name="Uzman A."/>
            <person name="Fox G.E."/>
            <person name="Cardenas A.M."/>
            <person name="Muzny D.M."/>
            <person name="Hemphill L."/>
            <person name="Ding Y."/>
            <person name="Dugan S."/>
            <person name="Blyth P.R."/>
            <person name="Buhay C.J."/>
            <person name="Dinh H.H."/>
            <person name="Hawes A.C."/>
            <person name="Holder M."/>
            <person name="Kovar C.L."/>
            <person name="Lee S.L."/>
            <person name="Liu W."/>
            <person name="Nazareth L.V."/>
            <person name="Wang Q."/>
            <person name="Zhou J."/>
            <person name="Kaplan S.L."/>
            <person name="Weinstock G.M."/>
        </authorList>
    </citation>
    <scope>NUCLEOTIDE SEQUENCE [LARGE SCALE GENOMIC DNA]</scope>
    <source>
        <strain>USA300 / TCH1516</strain>
    </source>
</reference>
<gene>
    <name type="ordered locus">USA300HOU_1615</name>
</gene>
<comment type="similarity">
    <text evidence="1">Belongs to the UPF0473 family.</text>
</comment>